<organism>
    <name type="scientific">Bacillus subtilis (strain 168)</name>
    <dbReference type="NCBI Taxonomy" id="224308"/>
    <lineage>
        <taxon>Bacteria</taxon>
        <taxon>Bacillati</taxon>
        <taxon>Bacillota</taxon>
        <taxon>Bacilli</taxon>
        <taxon>Bacillales</taxon>
        <taxon>Bacillaceae</taxon>
        <taxon>Bacillus</taxon>
    </lineage>
</organism>
<proteinExistence type="evidence at protein level"/>
<protein>
    <recommendedName>
        <fullName>Pyruvate dehydrogenase E1 component subunit beta</fullName>
        <ecNumber>1.2.4.1</ecNumber>
    </recommendedName>
    <alternativeName>
        <fullName>S complex, 36 kDa subunit</fullName>
    </alternativeName>
</protein>
<evidence type="ECO:0000250" key="1"/>
<evidence type="ECO:0000269" key="2">
    <source>
    </source>
</evidence>
<evidence type="ECO:0000269" key="3">
    <source>
    </source>
</evidence>
<evidence type="ECO:0000303" key="4">
    <source>
    </source>
</evidence>
<evidence type="ECO:0000312" key="5">
    <source>
        <dbReference type="EMBL" id="CAB13332.1"/>
    </source>
</evidence>
<keyword id="KW-0963">Cytoplasm</keyword>
<keyword id="KW-0903">Direct protein sequencing</keyword>
<keyword id="KW-0560">Oxidoreductase</keyword>
<keyword id="KW-0670">Pyruvate</keyword>
<keyword id="KW-1185">Reference proteome</keyword>
<keyword id="KW-0964">Secreted</keyword>
<keyword id="KW-0786">Thiamine pyrophosphate</keyword>
<reference key="1">
    <citation type="journal article" date="1990" name="J. Bacteriol.">
        <title>Secretory S complex of Bacillus subtilis: sequence analysis and identity to pyruvate dehydrogenase.</title>
        <authorList>
            <person name="Hemilae H.O."/>
            <person name="Palva A."/>
            <person name="Paulin L."/>
            <person name="Arvidson S."/>
            <person name="Palva I."/>
        </authorList>
    </citation>
    <scope>NUCLEOTIDE SEQUENCE [GENOMIC DNA]</scope>
    <source>
        <strain>168</strain>
    </source>
</reference>
<reference key="2">
    <citation type="journal article" date="1996" name="Microbiology">
        <title>The ampS-nprE (124 degrees-127 degrees) region of the Bacillus subtilis 168 chromosome: sequencing of a 27 kb segment and identification of several genes in the area.</title>
        <authorList>
            <person name="Winters P."/>
            <person name="Caldwell R.M."/>
            <person name="Enfield L."/>
            <person name="Ferrari E."/>
        </authorList>
    </citation>
    <scope>NUCLEOTIDE SEQUENCE [GENOMIC DNA]</scope>
    <source>
        <strain>168</strain>
    </source>
</reference>
<reference key="3">
    <citation type="submission" date="1997-07" db="EMBL/GenBank/DDBJ databases">
        <title>Sequence analysis of the mobA-ampS region of the Bacillus subtilis chromosome.</title>
        <authorList>
            <person name="Caldwell R.M."/>
            <person name="Ferrari E."/>
        </authorList>
    </citation>
    <scope>NUCLEOTIDE SEQUENCE [GENOMIC DNA]</scope>
    <source>
        <strain>168</strain>
    </source>
</reference>
<reference key="4">
    <citation type="journal article" date="1997" name="Nature">
        <title>The complete genome sequence of the Gram-positive bacterium Bacillus subtilis.</title>
        <authorList>
            <person name="Kunst F."/>
            <person name="Ogasawara N."/>
            <person name="Moszer I."/>
            <person name="Albertini A.M."/>
            <person name="Alloni G."/>
            <person name="Azevedo V."/>
            <person name="Bertero M.G."/>
            <person name="Bessieres P."/>
            <person name="Bolotin A."/>
            <person name="Borchert S."/>
            <person name="Borriss R."/>
            <person name="Boursier L."/>
            <person name="Brans A."/>
            <person name="Braun M."/>
            <person name="Brignell S.C."/>
            <person name="Bron S."/>
            <person name="Brouillet S."/>
            <person name="Bruschi C.V."/>
            <person name="Caldwell B."/>
            <person name="Capuano V."/>
            <person name="Carter N.M."/>
            <person name="Choi S.-K."/>
            <person name="Codani J.-J."/>
            <person name="Connerton I.F."/>
            <person name="Cummings N.J."/>
            <person name="Daniel R.A."/>
            <person name="Denizot F."/>
            <person name="Devine K.M."/>
            <person name="Duesterhoeft A."/>
            <person name="Ehrlich S.D."/>
            <person name="Emmerson P.T."/>
            <person name="Entian K.-D."/>
            <person name="Errington J."/>
            <person name="Fabret C."/>
            <person name="Ferrari E."/>
            <person name="Foulger D."/>
            <person name="Fritz C."/>
            <person name="Fujita M."/>
            <person name="Fujita Y."/>
            <person name="Fuma S."/>
            <person name="Galizzi A."/>
            <person name="Galleron N."/>
            <person name="Ghim S.-Y."/>
            <person name="Glaser P."/>
            <person name="Goffeau A."/>
            <person name="Golightly E.J."/>
            <person name="Grandi G."/>
            <person name="Guiseppi G."/>
            <person name="Guy B.J."/>
            <person name="Haga K."/>
            <person name="Haiech J."/>
            <person name="Harwood C.R."/>
            <person name="Henaut A."/>
            <person name="Hilbert H."/>
            <person name="Holsappel S."/>
            <person name="Hosono S."/>
            <person name="Hullo M.-F."/>
            <person name="Itaya M."/>
            <person name="Jones L.-M."/>
            <person name="Joris B."/>
            <person name="Karamata D."/>
            <person name="Kasahara Y."/>
            <person name="Klaerr-Blanchard M."/>
            <person name="Klein C."/>
            <person name="Kobayashi Y."/>
            <person name="Koetter P."/>
            <person name="Koningstein G."/>
            <person name="Krogh S."/>
            <person name="Kumano M."/>
            <person name="Kurita K."/>
            <person name="Lapidus A."/>
            <person name="Lardinois S."/>
            <person name="Lauber J."/>
            <person name="Lazarevic V."/>
            <person name="Lee S.-M."/>
            <person name="Levine A."/>
            <person name="Liu H."/>
            <person name="Masuda S."/>
            <person name="Mauel C."/>
            <person name="Medigue C."/>
            <person name="Medina N."/>
            <person name="Mellado R.P."/>
            <person name="Mizuno M."/>
            <person name="Moestl D."/>
            <person name="Nakai S."/>
            <person name="Noback M."/>
            <person name="Noone D."/>
            <person name="O'Reilly M."/>
            <person name="Ogawa K."/>
            <person name="Ogiwara A."/>
            <person name="Oudega B."/>
            <person name="Park S.-H."/>
            <person name="Parro V."/>
            <person name="Pohl T.M."/>
            <person name="Portetelle D."/>
            <person name="Porwollik S."/>
            <person name="Prescott A.M."/>
            <person name="Presecan E."/>
            <person name="Pujic P."/>
            <person name="Purnelle B."/>
            <person name="Rapoport G."/>
            <person name="Rey M."/>
            <person name="Reynolds S."/>
            <person name="Rieger M."/>
            <person name="Rivolta C."/>
            <person name="Rocha E."/>
            <person name="Roche B."/>
            <person name="Rose M."/>
            <person name="Sadaie Y."/>
            <person name="Sato T."/>
            <person name="Scanlan E."/>
            <person name="Schleich S."/>
            <person name="Schroeter R."/>
            <person name="Scoffone F."/>
            <person name="Sekiguchi J."/>
            <person name="Sekowska A."/>
            <person name="Seror S.J."/>
            <person name="Serror P."/>
            <person name="Shin B.-S."/>
            <person name="Soldo B."/>
            <person name="Sorokin A."/>
            <person name="Tacconi E."/>
            <person name="Takagi T."/>
            <person name="Takahashi H."/>
            <person name="Takemaru K."/>
            <person name="Takeuchi M."/>
            <person name="Tamakoshi A."/>
            <person name="Tanaka T."/>
            <person name="Terpstra P."/>
            <person name="Tognoni A."/>
            <person name="Tosato V."/>
            <person name="Uchiyama S."/>
            <person name="Vandenbol M."/>
            <person name="Vannier F."/>
            <person name="Vassarotti A."/>
            <person name="Viari A."/>
            <person name="Wambutt R."/>
            <person name="Wedler E."/>
            <person name="Wedler H."/>
            <person name="Weitzenegger T."/>
            <person name="Winters P."/>
            <person name="Wipat A."/>
            <person name="Yamamoto H."/>
            <person name="Yamane K."/>
            <person name="Yasumoto K."/>
            <person name="Yata K."/>
            <person name="Yoshida K."/>
            <person name="Yoshikawa H.-F."/>
            <person name="Zumstein E."/>
            <person name="Yoshikawa H."/>
            <person name="Danchin A."/>
        </authorList>
    </citation>
    <scope>NUCLEOTIDE SEQUENCE [LARGE SCALE GENOMIC DNA]</scope>
    <source>
        <strain>168</strain>
    </source>
</reference>
<reference key="5">
    <citation type="journal article" date="2011" name="J. Bacteriol.">
        <title>Nonclassical protein secretion by Bacillus subtilis in the stationary phase is not due to cell lysis.</title>
        <authorList>
            <person name="Yang C.K."/>
            <person name="Ewis H.E."/>
            <person name="Zhang X."/>
            <person name="Lu C.D."/>
            <person name="Hu H.J."/>
            <person name="Pan Y."/>
            <person name="Abdelal A.T."/>
            <person name="Tai P.C."/>
        </authorList>
    </citation>
    <scope>PROTEIN SEQUENCE OF N-TERMINUS</scope>
    <scope>SUBCELLULAR LOCATION</scope>
    <source>
        <strain>168 / WB600BHM</strain>
    </source>
</reference>
<reference key="6">
    <citation type="journal article" date="2023" name="Mol. Syst. Biol.">
        <title>Protein complexes in cells by AI-assisted structural proteomics.</title>
        <authorList>
            <person name="O'Reilly F.J."/>
            <person name="Graziadei A."/>
            <person name="Forbrig C."/>
            <person name="Bremenkamp R."/>
            <person name="Charles K."/>
            <person name="Lenz S."/>
            <person name="Elfmann C."/>
            <person name="Fischer L."/>
            <person name="Stuelke J."/>
            <person name="Rappsilber J."/>
        </authorList>
    </citation>
    <scope>ACTIVITY REGULATION</scope>
    <source>
        <strain>168</strain>
    </source>
</reference>
<feature type="chain" id="PRO_0000162222" description="Pyruvate dehydrogenase E1 component subunit beta">
    <location>
        <begin position="1"/>
        <end position="325"/>
    </location>
</feature>
<feature type="binding site" evidence="1">
    <location>
        <position position="60"/>
    </location>
    <ligand>
        <name>thiamine diphosphate</name>
        <dbReference type="ChEBI" id="CHEBI:58937"/>
    </ligand>
</feature>
<gene>
    <name evidence="4" type="primary">pdhB</name>
    <name type="synonym">aceB</name>
    <name evidence="5" type="ordered locus">BSU14590</name>
</gene>
<dbReference type="EC" id="1.2.4.1"/>
<dbReference type="EMBL" id="M57435">
    <property type="protein sequence ID" value="AAA62682.1"/>
    <property type="molecule type" value="Genomic_DNA"/>
</dbReference>
<dbReference type="EMBL" id="AF012285">
    <property type="protein sequence ID" value="AAC24933.1"/>
    <property type="molecule type" value="Genomic_DNA"/>
</dbReference>
<dbReference type="EMBL" id="AL009126">
    <property type="protein sequence ID" value="CAB13332.1"/>
    <property type="molecule type" value="Genomic_DNA"/>
</dbReference>
<dbReference type="PIR" id="C36718">
    <property type="entry name" value="C36718"/>
</dbReference>
<dbReference type="RefSeq" id="NP_389342.1">
    <property type="nucleotide sequence ID" value="NC_000964.3"/>
</dbReference>
<dbReference type="RefSeq" id="WP_003232313.1">
    <property type="nucleotide sequence ID" value="NZ_OZ025638.1"/>
</dbReference>
<dbReference type="SMR" id="P21882"/>
<dbReference type="FunCoup" id="P21882">
    <property type="interactions" value="576"/>
</dbReference>
<dbReference type="IntAct" id="P21882">
    <property type="interactions" value="1"/>
</dbReference>
<dbReference type="MINT" id="P21882"/>
<dbReference type="STRING" id="224308.BSU14590"/>
<dbReference type="jPOST" id="P21882"/>
<dbReference type="PaxDb" id="224308-BSU14590"/>
<dbReference type="EnsemblBacteria" id="CAB13332">
    <property type="protein sequence ID" value="CAB13332"/>
    <property type="gene ID" value="BSU_14590"/>
</dbReference>
<dbReference type="GeneID" id="939496"/>
<dbReference type="KEGG" id="bsu:BSU14590"/>
<dbReference type="PATRIC" id="fig|224308.179.peg.1591"/>
<dbReference type="eggNOG" id="COG0022">
    <property type="taxonomic scope" value="Bacteria"/>
</dbReference>
<dbReference type="InParanoid" id="P21882"/>
<dbReference type="OrthoDB" id="9771835at2"/>
<dbReference type="PhylomeDB" id="P21882"/>
<dbReference type="BioCyc" id="BSUB:BSU14590-MONOMER"/>
<dbReference type="Proteomes" id="UP000001570">
    <property type="component" value="Chromosome"/>
</dbReference>
<dbReference type="GO" id="GO:0005737">
    <property type="term" value="C:cytoplasm"/>
    <property type="evidence" value="ECO:0007669"/>
    <property type="project" value="UniProtKB-SubCell"/>
</dbReference>
<dbReference type="GO" id="GO:0005576">
    <property type="term" value="C:extracellular region"/>
    <property type="evidence" value="ECO:0007669"/>
    <property type="project" value="UniProtKB-SubCell"/>
</dbReference>
<dbReference type="GO" id="GO:0004739">
    <property type="term" value="F:pyruvate dehydrogenase (acetyl-transferring) activity"/>
    <property type="evidence" value="ECO:0007669"/>
    <property type="project" value="UniProtKB-EC"/>
</dbReference>
<dbReference type="CDD" id="cd07036">
    <property type="entry name" value="TPP_PYR_E1-PDHc-beta_like"/>
    <property type="match status" value="1"/>
</dbReference>
<dbReference type="FunFam" id="3.40.50.920:FF:000001">
    <property type="entry name" value="Pyruvate dehydrogenase E1 beta subunit"/>
    <property type="match status" value="1"/>
</dbReference>
<dbReference type="FunFam" id="3.40.50.970:FF:000001">
    <property type="entry name" value="Pyruvate dehydrogenase E1 beta subunit"/>
    <property type="match status" value="1"/>
</dbReference>
<dbReference type="Gene3D" id="3.40.50.920">
    <property type="match status" value="1"/>
</dbReference>
<dbReference type="Gene3D" id="3.40.50.970">
    <property type="match status" value="1"/>
</dbReference>
<dbReference type="InterPro" id="IPR029061">
    <property type="entry name" value="THDP-binding"/>
</dbReference>
<dbReference type="InterPro" id="IPR009014">
    <property type="entry name" value="Transketo_C/PFOR_II"/>
</dbReference>
<dbReference type="InterPro" id="IPR005475">
    <property type="entry name" value="Transketolase-like_Pyr-bd"/>
</dbReference>
<dbReference type="InterPro" id="IPR033248">
    <property type="entry name" value="Transketolase_C"/>
</dbReference>
<dbReference type="PANTHER" id="PTHR43257">
    <property type="entry name" value="PYRUVATE DEHYDROGENASE E1 COMPONENT BETA SUBUNIT"/>
    <property type="match status" value="1"/>
</dbReference>
<dbReference type="PANTHER" id="PTHR43257:SF2">
    <property type="entry name" value="PYRUVATE DEHYDROGENASE E1 COMPONENT SUBUNIT BETA"/>
    <property type="match status" value="1"/>
</dbReference>
<dbReference type="Pfam" id="PF02779">
    <property type="entry name" value="Transket_pyr"/>
    <property type="match status" value="1"/>
</dbReference>
<dbReference type="Pfam" id="PF02780">
    <property type="entry name" value="Transketolase_C"/>
    <property type="match status" value="1"/>
</dbReference>
<dbReference type="SMART" id="SM00861">
    <property type="entry name" value="Transket_pyr"/>
    <property type="match status" value="1"/>
</dbReference>
<dbReference type="SUPFAM" id="SSF52518">
    <property type="entry name" value="Thiamin diphosphate-binding fold (THDP-binding)"/>
    <property type="match status" value="1"/>
</dbReference>
<dbReference type="SUPFAM" id="SSF52922">
    <property type="entry name" value="TK C-terminal domain-like"/>
    <property type="match status" value="1"/>
</dbReference>
<name>ODPB_BACSU</name>
<accession>P21882</accession>
<comment type="function">
    <text>The pyruvate dehydrogenase complex catalyzes the overall conversion of pyruvate to acetyl-CoA and CO(2). It contains multiple copies of three enzymatic components: pyruvate dehydrogenase (E1), dihydrolipoamide acetyltransferase (E2) and lipoamide dehydrogenase (E3).</text>
</comment>
<comment type="function">
    <text>The B.subtilis PDH complex also possesses branched-chain 2-oxoacid dehydrogenase (BCDH) activity.</text>
</comment>
<comment type="catalytic activity">
    <reaction>
        <text>N(6)-[(R)-lipoyl]-L-lysyl-[protein] + pyruvate + H(+) = N(6)-[(R)-S(8)-acetyldihydrolipoyl]-L-lysyl-[protein] + CO2</text>
        <dbReference type="Rhea" id="RHEA:19189"/>
        <dbReference type="Rhea" id="RHEA-COMP:10474"/>
        <dbReference type="Rhea" id="RHEA-COMP:10478"/>
        <dbReference type="ChEBI" id="CHEBI:15361"/>
        <dbReference type="ChEBI" id="CHEBI:15378"/>
        <dbReference type="ChEBI" id="CHEBI:16526"/>
        <dbReference type="ChEBI" id="CHEBI:83099"/>
        <dbReference type="ChEBI" id="CHEBI:83111"/>
        <dbReference type="EC" id="1.2.4.1"/>
    </reaction>
</comment>
<comment type="cofactor">
    <cofactor>
        <name>thiamine diphosphate</name>
        <dbReference type="ChEBI" id="CHEBI:58937"/>
    </cofactor>
</comment>
<comment type="activity regulation">
    <text evidence="3">Activity of the E1 module is inhibited by the pyruvate dehydrogenase inhibitor PdhI.</text>
</comment>
<comment type="subunit">
    <text>Heterodimer of an alpha and a beta chain.</text>
</comment>
<comment type="subcellular location">
    <subcellularLocation>
        <location evidence="2">Cytoplasm</location>
    </subcellularLocation>
    <subcellularLocation>
        <location evidence="2">Secreted</location>
    </subcellularLocation>
    <text evidence="2">Present in the cytoplasm early in growth, as cells become stationary protein also accumulates in the medium; secreted protein is not processed (PubMed:21856851).</text>
</comment>
<sequence>MAQMTMIQAITDALRTELKNDENVLVFGEDVGVNGGVFRATEGLQKEFGEDRVFDTPLAESGIGGLALGLGLNGFRPVMEIQFFGFVYEVMDSVSGQMARMRYRSGGRWTSPVTIRSPFGGGVHTPELHADSLEGLVAQQPGIKVVIPSTPYDAKGLLISAIRDNDPVVFLEHMKLYRSFRQEVPEEEYTIELGKADVKREGTDLSIITYGAMVHESLKAADELEKDGISAEVVDLRTVSPLDIDTIIASVEKTGRAIVVQEAQKQAGIAANVVAEINDRAILSLEAPVLRVAAPDTVFPFSQAESVWLPNHKDVLETARKVLEF</sequence>